<organism>
    <name type="scientific">Staphylococcus aureus (strain bovine RF122 / ET3-1)</name>
    <dbReference type="NCBI Taxonomy" id="273036"/>
    <lineage>
        <taxon>Bacteria</taxon>
        <taxon>Bacillati</taxon>
        <taxon>Bacillota</taxon>
        <taxon>Bacilli</taxon>
        <taxon>Bacillales</taxon>
        <taxon>Staphylococcaceae</taxon>
        <taxon>Staphylococcus</taxon>
    </lineage>
</organism>
<dbReference type="EMBL" id="AJ938182">
    <property type="protein sequence ID" value="CAI81222.1"/>
    <property type="molecule type" value="Genomic_DNA"/>
</dbReference>
<dbReference type="SMR" id="Q2YTB6"/>
<dbReference type="KEGG" id="sab:SAB1533c"/>
<dbReference type="HOGENOM" id="CLU_033732_3_0_9"/>
<dbReference type="GO" id="GO:0005829">
    <property type="term" value="C:cytosol"/>
    <property type="evidence" value="ECO:0007669"/>
    <property type="project" value="TreeGrafter"/>
</dbReference>
<dbReference type="GO" id="GO:0005525">
    <property type="term" value="F:GTP binding"/>
    <property type="evidence" value="ECO:0007669"/>
    <property type="project" value="UniProtKB-UniRule"/>
</dbReference>
<dbReference type="GO" id="GO:0046872">
    <property type="term" value="F:metal ion binding"/>
    <property type="evidence" value="ECO:0007669"/>
    <property type="project" value="UniProtKB-KW"/>
</dbReference>
<dbReference type="GO" id="GO:0000917">
    <property type="term" value="P:division septum assembly"/>
    <property type="evidence" value="ECO:0007669"/>
    <property type="project" value="UniProtKB-KW"/>
</dbReference>
<dbReference type="CDD" id="cd01876">
    <property type="entry name" value="YihA_EngB"/>
    <property type="match status" value="1"/>
</dbReference>
<dbReference type="FunFam" id="3.40.50.300:FF:000098">
    <property type="entry name" value="Probable GTP-binding protein EngB"/>
    <property type="match status" value="1"/>
</dbReference>
<dbReference type="Gene3D" id="3.40.50.300">
    <property type="entry name" value="P-loop containing nucleotide triphosphate hydrolases"/>
    <property type="match status" value="1"/>
</dbReference>
<dbReference type="HAMAP" id="MF_00321">
    <property type="entry name" value="GTPase_EngB"/>
    <property type="match status" value="1"/>
</dbReference>
<dbReference type="InterPro" id="IPR030393">
    <property type="entry name" value="G_ENGB_dom"/>
</dbReference>
<dbReference type="InterPro" id="IPR006073">
    <property type="entry name" value="GTP-bd"/>
</dbReference>
<dbReference type="InterPro" id="IPR019987">
    <property type="entry name" value="GTP-bd_ribosome_bio_YsxC"/>
</dbReference>
<dbReference type="InterPro" id="IPR027417">
    <property type="entry name" value="P-loop_NTPase"/>
</dbReference>
<dbReference type="NCBIfam" id="TIGR03598">
    <property type="entry name" value="GTPase_YsxC"/>
    <property type="match status" value="1"/>
</dbReference>
<dbReference type="PANTHER" id="PTHR11649:SF13">
    <property type="entry name" value="ENGB-TYPE G DOMAIN-CONTAINING PROTEIN"/>
    <property type="match status" value="1"/>
</dbReference>
<dbReference type="PANTHER" id="PTHR11649">
    <property type="entry name" value="MSS1/TRME-RELATED GTP-BINDING PROTEIN"/>
    <property type="match status" value="1"/>
</dbReference>
<dbReference type="Pfam" id="PF01926">
    <property type="entry name" value="MMR_HSR1"/>
    <property type="match status" value="1"/>
</dbReference>
<dbReference type="SUPFAM" id="SSF52540">
    <property type="entry name" value="P-loop containing nucleoside triphosphate hydrolases"/>
    <property type="match status" value="1"/>
</dbReference>
<dbReference type="PROSITE" id="PS51706">
    <property type="entry name" value="G_ENGB"/>
    <property type="match status" value="1"/>
</dbReference>
<accession>Q2YTB6</accession>
<protein>
    <recommendedName>
        <fullName evidence="1">Probable GTP-binding protein EngB</fullName>
    </recommendedName>
</protein>
<evidence type="ECO:0000255" key="1">
    <source>
        <dbReference type="HAMAP-Rule" id="MF_00321"/>
    </source>
</evidence>
<proteinExistence type="inferred from homology"/>
<sequence length="196" mass="22685">MKVNPNNIELIISAVKEEQYPETELSEVALSGRSNVGKSTFINSMIGRKNMARTSQQPGKTQTLNFYNIDEQLIFVDVPGYGYAKVSKTQREKFGKMIEEYITKRENLQLVIQLVDLRHDPTQDDILMYNYLKHFDIPTLVICTKEDKIPKGKVQKHIKNIKTQLDMDPDDTIVSYSSIQNNKQQQIWNLIEPYIS</sequence>
<comment type="function">
    <text evidence="1">Necessary for normal cell division and for the maintenance of normal septation.</text>
</comment>
<comment type="cofactor">
    <cofactor evidence="1">
        <name>Mg(2+)</name>
        <dbReference type="ChEBI" id="CHEBI:18420"/>
    </cofactor>
</comment>
<comment type="similarity">
    <text evidence="1">Belongs to the TRAFAC class TrmE-Era-EngA-EngB-Septin-like GTPase superfamily. EngB GTPase family.</text>
</comment>
<keyword id="KW-0131">Cell cycle</keyword>
<keyword id="KW-0132">Cell division</keyword>
<keyword id="KW-0342">GTP-binding</keyword>
<keyword id="KW-0460">Magnesium</keyword>
<keyword id="KW-0479">Metal-binding</keyword>
<keyword id="KW-0547">Nucleotide-binding</keyword>
<keyword id="KW-0717">Septation</keyword>
<reference key="1">
    <citation type="journal article" date="2007" name="PLoS ONE">
        <title>Molecular correlates of host specialization in Staphylococcus aureus.</title>
        <authorList>
            <person name="Herron-Olson L."/>
            <person name="Fitzgerald J.R."/>
            <person name="Musser J.M."/>
            <person name="Kapur V."/>
        </authorList>
    </citation>
    <scope>NUCLEOTIDE SEQUENCE [LARGE SCALE GENOMIC DNA]</scope>
    <source>
        <strain>bovine RF122 / ET3-1</strain>
    </source>
</reference>
<gene>
    <name evidence="1" type="primary">engB</name>
    <name type="ordered locus">SAB1533c</name>
</gene>
<feature type="chain" id="PRO_0000266955" description="Probable GTP-binding protein EngB">
    <location>
        <begin position="1"/>
        <end position="196"/>
    </location>
</feature>
<feature type="domain" description="EngB-type G" evidence="1">
    <location>
        <begin position="24"/>
        <end position="196"/>
    </location>
</feature>
<feature type="binding site" evidence="1">
    <location>
        <begin position="32"/>
        <end position="39"/>
    </location>
    <ligand>
        <name>GTP</name>
        <dbReference type="ChEBI" id="CHEBI:37565"/>
    </ligand>
</feature>
<feature type="binding site" evidence="1">
    <location>
        <position position="39"/>
    </location>
    <ligand>
        <name>Mg(2+)</name>
        <dbReference type="ChEBI" id="CHEBI:18420"/>
    </ligand>
</feature>
<feature type="binding site" evidence="1">
    <location>
        <begin position="59"/>
        <end position="63"/>
    </location>
    <ligand>
        <name>GTP</name>
        <dbReference type="ChEBI" id="CHEBI:37565"/>
    </ligand>
</feature>
<feature type="binding site" evidence="1">
    <location>
        <position position="61"/>
    </location>
    <ligand>
        <name>Mg(2+)</name>
        <dbReference type="ChEBI" id="CHEBI:18420"/>
    </ligand>
</feature>
<feature type="binding site" evidence="1">
    <location>
        <begin position="77"/>
        <end position="80"/>
    </location>
    <ligand>
        <name>GTP</name>
        <dbReference type="ChEBI" id="CHEBI:37565"/>
    </ligand>
</feature>
<feature type="binding site" evidence="1">
    <location>
        <begin position="144"/>
        <end position="147"/>
    </location>
    <ligand>
        <name>GTP</name>
        <dbReference type="ChEBI" id="CHEBI:37565"/>
    </ligand>
</feature>
<feature type="binding site" evidence="1">
    <location>
        <begin position="176"/>
        <end position="178"/>
    </location>
    <ligand>
        <name>GTP</name>
        <dbReference type="ChEBI" id="CHEBI:37565"/>
    </ligand>
</feature>
<name>ENGB_STAAB</name>